<name>TSR1_CAEBR</name>
<gene>
    <name type="ORF">CBG04291</name>
</gene>
<sequence>MSTTGHRAGVFKKPAKPHKSWKGKRTKGEITTENRGREGVKQLTRSAHSTHRAVSKDARRNQLKMARDRKMADAMERRRTSNAPCLVTILSLGVGARPSEFLKKLATCDETIVQTHSPSTIDFAIPRFKSRISFLTPDKENVDSVLDAIRASDVLCFLWPLSAELSEWDEQLLTICKAAGLPTIVSVVPGLGGIQNHKKKEDVRKGIEFTISKWSMSNAGVMPADSVTDNLQLLRTLNETKKKPLTLQARHSYMLVENLEATESPEDSSKITLKAQGYLRGPEWNANNLIHLPGFGDFQISKIETAADPHPLKTSPPKGAEVIAKADEKRQSLETEITLDAMDGEQTWPTQEELEEADKEMRRVPKGTSSYQAAWILDDSEDDEDEEDEDEDMDDEEEDKDLEEDDEEEDTPMDLKSEAGETTASEMMFHDEIDEDINLAEVEKYRKERENAQWPDEVDTPIDQPARIRFQKYRGLKSFRTSTWDAKENLPVDYARIFQFANYKNTKKNVMSKIGGNDVDAGDAVIDKKFNGVFASVYIENVPVSVMEAYKETKNLVLFQLLPHEQKMSILNMVLKKHPSCTVPIGSEDQKFIFYVGFRQFEAHAVLSSNTPGDKFKLERFMPTEKTFVATVYAPITFNPATVLCFRQDDKGRQELVATGSVLDTNPDRIVLKRTVLSGHPYKINRRAVVVRYMFFNREDIDWFKPVELYTPSGRRGHIKEAVGTHGHMKCRFDQQLNAQDSVMLNLYKRVFPVWDYSLFNRNLNPSRFVERSRVESISLVQEDAMEE</sequence>
<organism>
    <name type="scientific">Caenorhabditis briggsae</name>
    <dbReference type="NCBI Taxonomy" id="6238"/>
    <lineage>
        <taxon>Eukaryota</taxon>
        <taxon>Metazoa</taxon>
        <taxon>Ecdysozoa</taxon>
        <taxon>Nematoda</taxon>
        <taxon>Chromadorea</taxon>
        <taxon>Rhabditida</taxon>
        <taxon>Rhabditina</taxon>
        <taxon>Rhabditomorpha</taxon>
        <taxon>Rhabditoidea</taxon>
        <taxon>Rhabditidae</taxon>
        <taxon>Peloderinae</taxon>
        <taxon>Caenorhabditis</taxon>
    </lineage>
</organism>
<comment type="function">
    <text evidence="1">Required during maturation of the 40S ribosomal subunit in the nucleolus.</text>
</comment>
<comment type="subcellular location">
    <subcellularLocation>
        <location evidence="1">Nucleus</location>
        <location evidence="1">Nucleolus</location>
    </subcellularLocation>
</comment>
<comment type="similarity">
    <text evidence="4">Belongs to the TRAFAC class translation factor GTPase superfamily. Bms1-like GTPase family. TSR1 subfamily.</text>
</comment>
<keyword id="KW-0539">Nucleus</keyword>
<keyword id="KW-1185">Reference proteome</keyword>
<keyword id="KW-0690">Ribosome biogenesis</keyword>
<dbReference type="EMBL" id="HE600920">
    <property type="protein sequence ID" value="CAP25030.3"/>
    <property type="molecule type" value="Genomic_DNA"/>
</dbReference>
<dbReference type="SMR" id="Q61WR2"/>
<dbReference type="FunCoup" id="Q61WR2">
    <property type="interactions" value="2512"/>
</dbReference>
<dbReference type="STRING" id="6238.Q61WR2"/>
<dbReference type="EnsemblMetazoa" id="CBG04291.1">
    <property type="protein sequence ID" value="CBG04291.1"/>
    <property type="gene ID" value="WBGene00026999"/>
</dbReference>
<dbReference type="KEGG" id="cbr:CBG_04291"/>
<dbReference type="CTD" id="8571874"/>
<dbReference type="WormBase" id="CBG04291">
    <property type="protein sequence ID" value="CBP01116"/>
    <property type="gene ID" value="WBGene00026999"/>
</dbReference>
<dbReference type="eggNOG" id="KOG1980">
    <property type="taxonomic scope" value="Eukaryota"/>
</dbReference>
<dbReference type="HOGENOM" id="CLU_009858_1_0_1"/>
<dbReference type="InParanoid" id="Q61WR2"/>
<dbReference type="OMA" id="HQFMGLL"/>
<dbReference type="Proteomes" id="UP000008549">
    <property type="component" value="Unassembled WGS sequence"/>
</dbReference>
<dbReference type="GO" id="GO:0005730">
    <property type="term" value="C:nucleolus"/>
    <property type="evidence" value="ECO:0000250"/>
    <property type="project" value="UniProtKB"/>
</dbReference>
<dbReference type="GO" id="GO:0005525">
    <property type="term" value="F:GTP binding"/>
    <property type="evidence" value="ECO:0000318"/>
    <property type="project" value="GO_Central"/>
</dbReference>
<dbReference type="GO" id="GO:0003924">
    <property type="term" value="F:GTPase activity"/>
    <property type="evidence" value="ECO:0000318"/>
    <property type="project" value="GO_Central"/>
</dbReference>
<dbReference type="GO" id="GO:0034511">
    <property type="term" value="F:U3 snoRNA binding"/>
    <property type="evidence" value="ECO:0000318"/>
    <property type="project" value="GO_Central"/>
</dbReference>
<dbReference type="GO" id="GO:0000479">
    <property type="term" value="P:endonucleolytic cleavage of tricistronic rRNA transcript (SSU-rRNA, 5.8S rRNA, LSU-rRNA)"/>
    <property type="evidence" value="ECO:0000318"/>
    <property type="project" value="GO_Central"/>
</dbReference>
<dbReference type="GO" id="GO:0000462">
    <property type="term" value="P:maturation of SSU-rRNA from tricistronic rRNA transcript (SSU-rRNA, 5.8S rRNA, LSU-rRNA)"/>
    <property type="evidence" value="ECO:0000318"/>
    <property type="project" value="GO_Central"/>
</dbReference>
<dbReference type="InterPro" id="IPR012948">
    <property type="entry name" value="AARP2CN"/>
</dbReference>
<dbReference type="InterPro" id="IPR039761">
    <property type="entry name" value="Bms1/Tsr1"/>
</dbReference>
<dbReference type="InterPro" id="IPR007034">
    <property type="entry name" value="BMS1_TSR1_C"/>
</dbReference>
<dbReference type="InterPro" id="IPR030387">
    <property type="entry name" value="G_Bms1/Tsr1_dom"/>
</dbReference>
<dbReference type="PANTHER" id="PTHR12858:SF1">
    <property type="entry name" value="PRE-RRNA-PROCESSING PROTEIN TSR1 HOMOLOG"/>
    <property type="match status" value="1"/>
</dbReference>
<dbReference type="PANTHER" id="PTHR12858">
    <property type="entry name" value="RIBOSOME BIOGENESIS PROTEIN"/>
    <property type="match status" value="1"/>
</dbReference>
<dbReference type="Pfam" id="PF08142">
    <property type="entry name" value="AARP2CN"/>
    <property type="match status" value="1"/>
</dbReference>
<dbReference type="Pfam" id="PF04950">
    <property type="entry name" value="RIBIOP_C"/>
    <property type="match status" value="1"/>
</dbReference>
<dbReference type="Pfam" id="PF22298">
    <property type="entry name" value="Tsr1_G-like"/>
    <property type="match status" value="1"/>
</dbReference>
<dbReference type="SMART" id="SM00785">
    <property type="entry name" value="AARP2CN"/>
    <property type="match status" value="1"/>
</dbReference>
<dbReference type="SMART" id="SM01362">
    <property type="entry name" value="DUF663"/>
    <property type="match status" value="1"/>
</dbReference>
<dbReference type="PROSITE" id="PS51714">
    <property type="entry name" value="G_BMS1"/>
    <property type="match status" value="1"/>
</dbReference>
<proteinExistence type="inferred from homology"/>
<evidence type="ECO:0000250" key="1"/>
<evidence type="ECO:0000255" key="2">
    <source>
        <dbReference type="PROSITE-ProRule" id="PRU01051"/>
    </source>
</evidence>
<evidence type="ECO:0000256" key="3">
    <source>
        <dbReference type="SAM" id="MobiDB-lite"/>
    </source>
</evidence>
<evidence type="ECO:0000305" key="4"/>
<feature type="chain" id="PRO_0000311278" description="Pre-rRNA-processing protein TSR1 homolog">
    <location>
        <begin position="1"/>
        <end position="788"/>
    </location>
</feature>
<feature type="domain" description="Bms1-type G" evidence="2">
    <location>
        <begin position="83"/>
        <end position="243"/>
    </location>
</feature>
<feature type="region of interest" description="Disordered" evidence="3">
    <location>
        <begin position="1"/>
        <end position="40"/>
    </location>
</feature>
<feature type="region of interest" description="Disordered" evidence="3">
    <location>
        <begin position="354"/>
        <end position="433"/>
    </location>
</feature>
<feature type="compositionally biased region" description="Basic residues" evidence="3">
    <location>
        <begin position="9"/>
        <end position="25"/>
    </location>
</feature>
<feature type="compositionally biased region" description="Basic and acidic residues" evidence="3">
    <location>
        <begin position="26"/>
        <end position="40"/>
    </location>
</feature>
<feature type="compositionally biased region" description="Acidic residues" evidence="3">
    <location>
        <begin position="378"/>
        <end position="412"/>
    </location>
</feature>
<reference key="1">
    <citation type="journal article" date="2003" name="PLoS Biol.">
        <title>The genome sequence of Caenorhabditis briggsae: a platform for comparative genomics.</title>
        <authorList>
            <person name="Stein L.D."/>
            <person name="Bao Z."/>
            <person name="Blasiar D."/>
            <person name="Blumenthal T."/>
            <person name="Brent M.R."/>
            <person name="Chen N."/>
            <person name="Chinwalla A."/>
            <person name="Clarke L."/>
            <person name="Clee C."/>
            <person name="Coghlan A."/>
            <person name="Coulson A."/>
            <person name="D'Eustachio P."/>
            <person name="Fitch D.H.A."/>
            <person name="Fulton L.A."/>
            <person name="Fulton R.E."/>
            <person name="Griffiths-Jones S."/>
            <person name="Harris T.W."/>
            <person name="Hillier L.W."/>
            <person name="Kamath R."/>
            <person name="Kuwabara P.E."/>
            <person name="Mardis E.R."/>
            <person name="Marra M.A."/>
            <person name="Miner T.L."/>
            <person name="Minx P."/>
            <person name="Mullikin J.C."/>
            <person name="Plumb R.W."/>
            <person name="Rogers J."/>
            <person name="Schein J.E."/>
            <person name="Sohrmann M."/>
            <person name="Spieth J."/>
            <person name="Stajich J.E."/>
            <person name="Wei C."/>
            <person name="Willey D."/>
            <person name="Wilson R.K."/>
            <person name="Durbin R.M."/>
            <person name="Waterston R.H."/>
        </authorList>
    </citation>
    <scope>NUCLEOTIDE SEQUENCE [LARGE SCALE GENOMIC DNA]</scope>
    <source>
        <strain>AF16</strain>
    </source>
</reference>
<protein>
    <recommendedName>
        <fullName>Pre-rRNA-processing protein TSR1 homolog</fullName>
    </recommendedName>
</protein>
<accession>Q61WR2</accession>
<accession>A8WX60</accession>